<accession>O22718</accession>
<accession>Q8RXG2</accession>
<accession>Q9C6C0</accession>
<name>ACLA2_ARATH</name>
<feature type="chain" id="PRO_0000412216" description="ATP-citrate synthase alpha chain protein 2">
    <location>
        <begin position="1"/>
        <end position="423"/>
    </location>
</feature>
<feature type="binding site" evidence="1">
    <location>
        <position position="343"/>
    </location>
    <ligand>
        <name>citrate</name>
        <dbReference type="ChEBI" id="CHEBI:16947"/>
    </ligand>
</feature>
<feature type="binding site" evidence="1">
    <location>
        <position position="345"/>
    </location>
    <ligand>
        <name>citrate</name>
        <dbReference type="ChEBI" id="CHEBI:16947"/>
    </ligand>
</feature>
<feature type="binding site" evidence="1">
    <location>
        <position position="376"/>
    </location>
    <ligand>
        <name>citrate</name>
        <dbReference type="ChEBI" id="CHEBI:16947"/>
    </ligand>
</feature>
<feature type="sequence conflict" description="In Ref. 3; AAL91162/AAM91141." evidence="2" ref="3">
    <original>A</original>
    <variation>P</variation>
    <location>
        <position position="156"/>
    </location>
</feature>
<evidence type="ECO:0000250" key="1"/>
<evidence type="ECO:0000305" key="2"/>
<comment type="function">
    <text evidence="1">ATP citrate-lyase is the primary enzyme responsible for the synthesis of cytosolic acetyl-CoA, used for the elongation of fatty acids and biosynthesis of isoprenoids, flavonoids and malonated derivatives. May supply substrate to the cytosolic acetyl-CoA carboxylase, which generates the malonyl-CoA used for the synthesis of a multitude of compounds, including very long chain fatty acids and flavonoids. Required for normal growth and development and elongation of C18 fatty acids to C20 to C24 fatty acids in seeds. In contrast to all known animal ACL enzymes having a homomeric structure, plant ACLs are composed of alpha and beta chains (By similarity).</text>
</comment>
<comment type="catalytic activity">
    <reaction>
        <text>oxaloacetate + acetyl-CoA + ADP + phosphate = citrate + ATP + CoA</text>
        <dbReference type="Rhea" id="RHEA:21160"/>
        <dbReference type="ChEBI" id="CHEBI:16452"/>
        <dbReference type="ChEBI" id="CHEBI:16947"/>
        <dbReference type="ChEBI" id="CHEBI:30616"/>
        <dbReference type="ChEBI" id="CHEBI:43474"/>
        <dbReference type="ChEBI" id="CHEBI:57287"/>
        <dbReference type="ChEBI" id="CHEBI:57288"/>
        <dbReference type="ChEBI" id="CHEBI:456216"/>
        <dbReference type="EC" id="2.3.3.8"/>
    </reaction>
</comment>
<comment type="subunit">
    <text evidence="1">Heterooctamer of 4 alpha and 4 beta chains.</text>
</comment>
<comment type="subcellular location">
    <subcellularLocation>
        <location evidence="1">Cytoplasm</location>
        <location evidence="1">Cytosol</location>
    </subcellularLocation>
</comment>
<comment type="similarity">
    <text evidence="2">Belongs to the succinate/malate CoA ligase beta subunit family.</text>
</comment>
<sequence length="423" mass="46760">MARKKIREYDSKRLVKEHFKRLSGQELPIRSVQINQETDLNELVEREPWLSSEKLVVKPDMLFGKRGKSGLVALNLDFADVATFVKERLGKEVEMSGCKGPITTFIVEPFVPHNEEFYLNIVSDRLGCSISFSECGGIDIEENWDKVKTITIPTGASLTFEICAPLVATLPLEIKGELEDFIQVIFTLFEDLDFTFLEMNPFTLVDGKPYPLDMRGELDDTAAFKNFKKWGDIEFPMPFGRVMSSTESFIHGLDEKTSASLKFTVLNPKGRIWTMVAGGGASVIYADTVGDLGYASELGNYAEYSGAPKEDEVLQYARVVIDCATANPDGKSRALVIGGGIANFTDVAATFNGIIRALKEKEAKLKAARMHIFVRRGGPNYQKGLAKMRSLGDEIGVPIEVYGPEATMTGICKEAIQYITAAA</sequence>
<gene>
    <name type="primary">ACLA-2</name>
    <name type="ordered locus">At1g60810</name>
    <name type="ORF">F23C21.5</name>
    <name type="ORF">F8A5.32</name>
</gene>
<protein>
    <recommendedName>
        <fullName>ATP-citrate synthase alpha chain protein 2</fullName>
        <shortName>ATP-citrate synthase A-2</shortName>
        <ecNumber>2.3.3.8</ecNumber>
    </recommendedName>
    <alternativeName>
        <fullName>ATP-citrate lyase A-2</fullName>
    </alternativeName>
    <alternativeName>
        <fullName>Citrate cleavage enzyme A-2</fullName>
    </alternativeName>
</protein>
<dbReference type="EC" id="2.3.3.8"/>
<dbReference type="EMBL" id="AC002292">
    <property type="protein sequence ID" value="AAB71965.1"/>
    <property type="molecule type" value="Genomic_DNA"/>
</dbReference>
<dbReference type="EMBL" id="AC079675">
    <property type="protein sequence ID" value="AAG51870.1"/>
    <property type="molecule type" value="Genomic_DNA"/>
</dbReference>
<dbReference type="EMBL" id="CP002684">
    <property type="protein sequence ID" value="AEE33735.1"/>
    <property type="molecule type" value="Genomic_DNA"/>
</dbReference>
<dbReference type="EMBL" id="CP002684">
    <property type="protein sequence ID" value="ANM58113.1"/>
    <property type="molecule type" value="Genomic_DNA"/>
</dbReference>
<dbReference type="EMBL" id="AY081273">
    <property type="protein sequence ID" value="AAL91162.1"/>
    <property type="molecule type" value="mRNA"/>
</dbReference>
<dbReference type="EMBL" id="AY128741">
    <property type="protein sequence ID" value="AAM91141.1"/>
    <property type="molecule type" value="mRNA"/>
</dbReference>
<dbReference type="PIR" id="F96633">
    <property type="entry name" value="F96633"/>
</dbReference>
<dbReference type="RefSeq" id="NP_001320572.1">
    <property type="nucleotide sequence ID" value="NM_001333917.1"/>
</dbReference>
<dbReference type="RefSeq" id="NP_176280.1">
    <property type="nucleotide sequence ID" value="NM_104764.4"/>
</dbReference>
<dbReference type="SMR" id="O22718"/>
<dbReference type="BioGRID" id="27599">
    <property type="interactions" value="1"/>
</dbReference>
<dbReference type="FunCoup" id="O22718">
    <property type="interactions" value="78"/>
</dbReference>
<dbReference type="STRING" id="3702.O22718"/>
<dbReference type="PaxDb" id="3702-AT1G60810.1"/>
<dbReference type="ProteomicsDB" id="243282"/>
<dbReference type="DNASU" id="842375"/>
<dbReference type="EnsemblPlants" id="AT1G60810.1">
    <property type="protein sequence ID" value="AT1G60810.1"/>
    <property type="gene ID" value="AT1G60810"/>
</dbReference>
<dbReference type="EnsemblPlants" id="AT1G60810.2">
    <property type="protein sequence ID" value="AT1G60810.2"/>
    <property type="gene ID" value="AT1G60810"/>
</dbReference>
<dbReference type="GeneID" id="842375"/>
<dbReference type="Gramene" id="AT1G60810.1">
    <property type="protein sequence ID" value="AT1G60810.1"/>
    <property type="gene ID" value="AT1G60810"/>
</dbReference>
<dbReference type="Gramene" id="AT1G60810.2">
    <property type="protein sequence ID" value="AT1G60810.2"/>
    <property type="gene ID" value="AT1G60810"/>
</dbReference>
<dbReference type="KEGG" id="ath:AT1G60810"/>
<dbReference type="Araport" id="AT1G60810"/>
<dbReference type="TAIR" id="AT1G60810">
    <property type="gene designation" value="ACLA-2"/>
</dbReference>
<dbReference type="eggNOG" id="KOG1254">
    <property type="taxonomic scope" value="Eukaryota"/>
</dbReference>
<dbReference type="HOGENOM" id="CLU_006587_3_1_1"/>
<dbReference type="InParanoid" id="O22718"/>
<dbReference type="OMA" id="SHEIGCY"/>
<dbReference type="PhylomeDB" id="O22718"/>
<dbReference type="PRO" id="PR:O22718"/>
<dbReference type="Proteomes" id="UP000006548">
    <property type="component" value="Chromosome 1"/>
</dbReference>
<dbReference type="ExpressionAtlas" id="O22718">
    <property type="expression patterns" value="baseline and differential"/>
</dbReference>
<dbReference type="GO" id="GO:0140615">
    <property type="term" value="C:ATP-dependent citrate lyase complex"/>
    <property type="evidence" value="ECO:0000250"/>
    <property type="project" value="TAIR"/>
</dbReference>
<dbReference type="GO" id="GO:0005829">
    <property type="term" value="C:cytosol"/>
    <property type="evidence" value="ECO:0007669"/>
    <property type="project" value="UniProtKB-SubCell"/>
</dbReference>
<dbReference type="GO" id="GO:0005524">
    <property type="term" value="F:ATP binding"/>
    <property type="evidence" value="ECO:0007669"/>
    <property type="project" value="UniProtKB-KW"/>
</dbReference>
<dbReference type="GO" id="GO:0003878">
    <property type="term" value="F:ATP citrate synthase activity"/>
    <property type="evidence" value="ECO:0000250"/>
    <property type="project" value="TAIR"/>
</dbReference>
<dbReference type="GO" id="GO:0006085">
    <property type="term" value="P:acetyl-CoA biosynthetic process"/>
    <property type="evidence" value="ECO:0000304"/>
    <property type="project" value="TAIR"/>
</dbReference>
<dbReference type="GO" id="GO:0006629">
    <property type="term" value="P:lipid metabolic process"/>
    <property type="evidence" value="ECO:0007669"/>
    <property type="project" value="UniProtKB-KW"/>
</dbReference>
<dbReference type="FunFam" id="3.30.470.110:FF:000002">
    <property type="entry name" value="ATP-citrate synthase alpha chain protein"/>
    <property type="match status" value="1"/>
</dbReference>
<dbReference type="FunFam" id="3.40.50.261:FF:000008">
    <property type="entry name" value="ATP-citrate synthase alpha chain protein"/>
    <property type="match status" value="1"/>
</dbReference>
<dbReference type="Gene3D" id="3.30.470.110">
    <property type="match status" value="1"/>
</dbReference>
<dbReference type="Gene3D" id="3.40.50.261">
    <property type="entry name" value="Succinyl-CoA synthetase domains"/>
    <property type="match status" value="1"/>
</dbReference>
<dbReference type="InterPro" id="IPR032263">
    <property type="entry name" value="Citrate-bd"/>
</dbReference>
<dbReference type="InterPro" id="IPR056749">
    <property type="entry name" value="Citrate_synth_N"/>
</dbReference>
<dbReference type="InterPro" id="IPR016102">
    <property type="entry name" value="Succinyl-CoA_synth-like"/>
</dbReference>
<dbReference type="PANTHER" id="PTHR11815:SF10">
    <property type="entry name" value="SUCCINATE--COA LIGASE [GDP-FORMING] SUBUNIT BETA, MITOCHONDRIAL"/>
    <property type="match status" value="1"/>
</dbReference>
<dbReference type="PANTHER" id="PTHR11815">
    <property type="entry name" value="SUCCINYL-COA SYNTHETASE BETA CHAIN"/>
    <property type="match status" value="1"/>
</dbReference>
<dbReference type="Pfam" id="PF16114">
    <property type="entry name" value="Citrate_bind"/>
    <property type="match status" value="1"/>
</dbReference>
<dbReference type="Pfam" id="PF24948">
    <property type="entry name" value="Citrate_synth_N"/>
    <property type="match status" value="1"/>
</dbReference>
<dbReference type="SUPFAM" id="SSF56059">
    <property type="entry name" value="Glutathione synthetase ATP-binding domain-like"/>
    <property type="match status" value="1"/>
</dbReference>
<dbReference type="SUPFAM" id="SSF52210">
    <property type="entry name" value="Succinyl-CoA synthetase domains"/>
    <property type="match status" value="1"/>
</dbReference>
<organism>
    <name type="scientific">Arabidopsis thaliana</name>
    <name type="common">Mouse-ear cress</name>
    <dbReference type="NCBI Taxonomy" id="3702"/>
    <lineage>
        <taxon>Eukaryota</taxon>
        <taxon>Viridiplantae</taxon>
        <taxon>Streptophyta</taxon>
        <taxon>Embryophyta</taxon>
        <taxon>Tracheophyta</taxon>
        <taxon>Spermatophyta</taxon>
        <taxon>Magnoliopsida</taxon>
        <taxon>eudicotyledons</taxon>
        <taxon>Gunneridae</taxon>
        <taxon>Pentapetalae</taxon>
        <taxon>rosids</taxon>
        <taxon>malvids</taxon>
        <taxon>Brassicales</taxon>
        <taxon>Brassicaceae</taxon>
        <taxon>Camelineae</taxon>
        <taxon>Arabidopsis</taxon>
    </lineage>
</organism>
<reference key="1">
    <citation type="journal article" date="2000" name="Nature">
        <title>Sequence and analysis of chromosome 1 of the plant Arabidopsis thaliana.</title>
        <authorList>
            <person name="Theologis A."/>
            <person name="Ecker J.R."/>
            <person name="Palm C.J."/>
            <person name="Federspiel N.A."/>
            <person name="Kaul S."/>
            <person name="White O."/>
            <person name="Alonso J."/>
            <person name="Altafi H."/>
            <person name="Araujo R."/>
            <person name="Bowman C.L."/>
            <person name="Brooks S.Y."/>
            <person name="Buehler E."/>
            <person name="Chan A."/>
            <person name="Chao Q."/>
            <person name="Chen H."/>
            <person name="Cheuk R.F."/>
            <person name="Chin C.W."/>
            <person name="Chung M.K."/>
            <person name="Conn L."/>
            <person name="Conway A.B."/>
            <person name="Conway A.R."/>
            <person name="Creasy T.H."/>
            <person name="Dewar K."/>
            <person name="Dunn P."/>
            <person name="Etgu P."/>
            <person name="Feldblyum T.V."/>
            <person name="Feng J.-D."/>
            <person name="Fong B."/>
            <person name="Fujii C.Y."/>
            <person name="Gill J.E."/>
            <person name="Goldsmith A.D."/>
            <person name="Haas B."/>
            <person name="Hansen N.F."/>
            <person name="Hughes B."/>
            <person name="Huizar L."/>
            <person name="Hunter J.L."/>
            <person name="Jenkins J."/>
            <person name="Johnson-Hopson C."/>
            <person name="Khan S."/>
            <person name="Khaykin E."/>
            <person name="Kim C.J."/>
            <person name="Koo H.L."/>
            <person name="Kremenetskaia I."/>
            <person name="Kurtz D.B."/>
            <person name="Kwan A."/>
            <person name="Lam B."/>
            <person name="Langin-Hooper S."/>
            <person name="Lee A."/>
            <person name="Lee J.M."/>
            <person name="Lenz C.A."/>
            <person name="Li J.H."/>
            <person name="Li Y.-P."/>
            <person name="Lin X."/>
            <person name="Liu S.X."/>
            <person name="Liu Z.A."/>
            <person name="Luros J.S."/>
            <person name="Maiti R."/>
            <person name="Marziali A."/>
            <person name="Militscher J."/>
            <person name="Miranda M."/>
            <person name="Nguyen M."/>
            <person name="Nierman W.C."/>
            <person name="Osborne B.I."/>
            <person name="Pai G."/>
            <person name="Peterson J."/>
            <person name="Pham P.K."/>
            <person name="Rizzo M."/>
            <person name="Rooney T."/>
            <person name="Rowley D."/>
            <person name="Sakano H."/>
            <person name="Salzberg S.L."/>
            <person name="Schwartz J.R."/>
            <person name="Shinn P."/>
            <person name="Southwick A.M."/>
            <person name="Sun H."/>
            <person name="Tallon L.J."/>
            <person name="Tambunga G."/>
            <person name="Toriumi M.J."/>
            <person name="Town C.D."/>
            <person name="Utterback T."/>
            <person name="Van Aken S."/>
            <person name="Vaysberg M."/>
            <person name="Vysotskaia V.S."/>
            <person name="Walker M."/>
            <person name="Wu D."/>
            <person name="Yu G."/>
            <person name="Fraser C.M."/>
            <person name="Venter J.C."/>
            <person name="Davis R.W."/>
        </authorList>
    </citation>
    <scope>NUCLEOTIDE SEQUENCE [LARGE SCALE GENOMIC DNA]</scope>
    <source>
        <strain>cv. Columbia</strain>
    </source>
</reference>
<reference key="2">
    <citation type="journal article" date="2017" name="Plant J.">
        <title>Araport11: a complete reannotation of the Arabidopsis thaliana reference genome.</title>
        <authorList>
            <person name="Cheng C.Y."/>
            <person name="Krishnakumar V."/>
            <person name="Chan A.P."/>
            <person name="Thibaud-Nissen F."/>
            <person name="Schobel S."/>
            <person name="Town C.D."/>
        </authorList>
    </citation>
    <scope>GENOME REANNOTATION</scope>
    <source>
        <strain>cv. Columbia</strain>
    </source>
</reference>
<reference key="3">
    <citation type="journal article" date="2003" name="Science">
        <title>Empirical analysis of transcriptional activity in the Arabidopsis genome.</title>
        <authorList>
            <person name="Yamada K."/>
            <person name="Lim J."/>
            <person name="Dale J.M."/>
            <person name="Chen H."/>
            <person name="Shinn P."/>
            <person name="Palm C.J."/>
            <person name="Southwick A.M."/>
            <person name="Wu H.C."/>
            <person name="Kim C.J."/>
            <person name="Nguyen M."/>
            <person name="Pham P.K."/>
            <person name="Cheuk R.F."/>
            <person name="Karlin-Newmann G."/>
            <person name="Liu S.X."/>
            <person name="Lam B."/>
            <person name="Sakano H."/>
            <person name="Wu T."/>
            <person name="Yu G."/>
            <person name="Miranda M."/>
            <person name="Quach H.L."/>
            <person name="Tripp M."/>
            <person name="Chang C.H."/>
            <person name="Lee J.M."/>
            <person name="Toriumi M.J."/>
            <person name="Chan M.M."/>
            <person name="Tang C.C."/>
            <person name="Onodera C.S."/>
            <person name="Deng J.M."/>
            <person name="Akiyama K."/>
            <person name="Ansari Y."/>
            <person name="Arakawa T."/>
            <person name="Banh J."/>
            <person name="Banno F."/>
            <person name="Bowser L."/>
            <person name="Brooks S.Y."/>
            <person name="Carninci P."/>
            <person name="Chao Q."/>
            <person name="Choy N."/>
            <person name="Enju A."/>
            <person name="Goldsmith A.D."/>
            <person name="Gurjal M."/>
            <person name="Hansen N.F."/>
            <person name="Hayashizaki Y."/>
            <person name="Johnson-Hopson C."/>
            <person name="Hsuan V.W."/>
            <person name="Iida K."/>
            <person name="Karnes M."/>
            <person name="Khan S."/>
            <person name="Koesema E."/>
            <person name="Ishida J."/>
            <person name="Jiang P.X."/>
            <person name="Jones T."/>
            <person name="Kawai J."/>
            <person name="Kamiya A."/>
            <person name="Meyers C."/>
            <person name="Nakajima M."/>
            <person name="Narusaka M."/>
            <person name="Seki M."/>
            <person name="Sakurai T."/>
            <person name="Satou M."/>
            <person name="Tamse R."/>
            <person name="Vaysberg M."/>
            <person name="Wallender E.K."/>
            <person name="Wong C."/>
            <person name="Yamamura Y."/>
            <person name="Yuan S."/>
            <person name="Shinozaki K."/>
            <person name="Davis R.W."/>
            <person name="Theologis A."/>
            <person name="Ecker J.R."/>
        </authorList>
    </citation>
    <scope>NUCLEOTIDE SEQUENCE [LARGE SCALE MRNA]</scope>
    <source>
        <strain>cv. Columbia</strain>
    </source>
</reference>
<keyword id="KW-0012">Acyltransferase</keyword>
<keyword id="KW-0067">ATP-binding</keyword>
<keyword id="KW-0963">Cytoplasm</keyword>
<keyword id="KW-0444">Lipid biosynthesis</keyword>
<keyword id="KW-0443">Lipid metabolism</keyword>
<keyword id="KW-0547">Nucleotide-binding</keyword>
<keyword id="KW-1185">Reference proteome</keyword>
<keyword id="KW-0808">Transferase</keyword>
<proteinExistence type="evidence at transcript level"/>